<sequence length="65" mass="7467">MFDSLAKAGKYLGQAAKLMIGMPDYDNYVEHMRVNHPDQTPMTYEEFFRERQDARYGGKGGARCC</sequence>
<keyword id="KW-1185">Reference proteome</keyword>
<feature type="chain" id="PRO_0000168662" description="Uncharacterized protein YbdD">
    <location>
        <begin position="1"/>
        <end position="65"/>
    </location>
</feature>
<organism>
    <name type="scientific">Escherichia coli (strain K12)</name>
    <dbReference type="NCBI Taxonomy" id="83333"/>
    <lineage>
        <taxon>Bacteria</taxon>
        <taxon>Pseudomonadati</taxon>
        <taxon>Pseudomonadota</taxon>
        <taxon>Gammaproteobacteria</taxon>
        <taxon>Enterobacterales</taxon>
        <taxon>Enterobacteriaceae</taxon>
        <taxon>Escherichia</taxon>
    </lineage>
</organism>
<dbReference type="EMBL" id="X52904">
    <property type="protein sequence ID" value="CAA37088.1"/>
    <property type="molecule type" value="Genomic_DNA"/>
</dbReference>
<dbReference type="EMBL" id="U82598">
    <property type="protein sequence ID" value="AAB40799.1"/>
    <property type="molecule type" value="Genomic_DNA"/>
</dbReference>
<dbReference type="EMBL" id="U00096">
    <property type="protein sequence ID" value="ABD18642.1"/>
    <property type="molecule type" value="Genomic_DNA"/>
</dbReference>
<dbReference type="EMBL" id="AP009048">
    <property type="protein sequence ID" value="BAA35228.1"/>
    <property type="molecule type" value="Genomic_DNA"/>
</dbReference>
<dbReference type="PIR" id="S14413">
    <property type="entry name" value="S14413"/>
</dbReference>
<dbReference type="RefSeq" id="WP_000460431.1">
    <property type="nucleotide sequence ID" value="NZ_STEB01000047.1"/>
</dbReference>
<dbReference type="RefSeq" id="YP_588442.1">
    <property type="nucleotide sequence ID" value="NC_000913.3"/>
</dbReference>
<dbReference type="SMR" id="P0AAS9"/>
<dbReference type="BioGRID" id="4260983">
    <property type="interactions" value="12"/>
</dbReference>
<dbReference type="FunCoup" id="P0AAS9">
    <property type="interactions" value="25"/>
</dbReference>
<dbReference type="IntAct" id="P0AAS9">
    <property type="interactions" value="8"/>
</dbReference>
<dbReference type="STRING" id="511145.b4512"/>
<dbReference type="TCDB" id="2.A.114.1.1">
    <property type="family name" value="the putative peptide transporter carbon starvation csta (csta) family"/>
</dbReference>
<dbReference type="jPOST" id="P0AAS9"/>
<dbReference type="PaxDb" id="511145-b4512"/>
<dbReference type="EnsemblBacteria" id="ABD18642">
    <property type="protein sequence ID" value="ABD18642"/>
    <property type="gene ID" value="b4512"/>
</dbReference>
<dbReference type="GeneID" id="949021"/>
<dbReference type="KEGG" id="ecj:JW0591"/>
<dbReference type="KEGG" id="eco:b4512"/>
<dbReference type="KEGG" id="ecoc:C3026_02990"/>
<dbReference type="PATRIC" id="fig|511145.12.peg.627"/>
<dbReference type="EchoBASE" id="EB1098"/>
<dbReference type="eggNOG" id="COG2879">
    <property type="taxonomic scope" value="Bacteria"/>
</dbReference>
<dbReference type="HOGENOM" id="CLU_171734_1_1_6"/>
<dbReference type="InParanoid" id="P0AAS9"/>
<dbReference type="OMA" id="VMSYAEF"/>
<dbReference type="OrthoDB" id="9814284at2"/>
<dbReference type="PhylomeDB" id="P0AAS9"/>
<dbReference type="BioCyc" id="EcoCyc:MONOMER0-2660"/>
<dbReference type="PRO" id="PR:P0AAS9"/>
<dbReference type="Proteomes" id="UP000000625">
    <property type="component" value="Chromosome"/>
</dbReference>
<dbReference type="InterPro" id="IPR007423">
    <property type="entry name" value="Sel_put"/>
</dbReference>
<dbReference type="PANTHER" id="PTHR38453:SF3">
    <property type="entry name" value="CYTOPLASMIC PROTEIN"/>
    <property type="match status" value="1"/>
</dbReference>
<dbReference type="PANTHER" id="PTHR38453">
    <property type="entry name" value="CYTOPLASMIC PROTEIN-RELATED"/>
    <property type="match status" value="1"/>
</dbReference>
<dbReference type="Pfam" id="PF04328">
    <property type="entry name" value="Sel_put"/>
    <property type="match status" value="1"/>
</dbReference>
<accession>P0AAS9</accession>
<accession>P23518</accession>
<accession>Q2EEQ7</accession>
<proteinExistence type="predicted"/>
<gene>
    <name type="primary">ybdD</name>
    <name type="ordered locus">b4512</name>
    <name type="ordered locus">JW0591</name>
</gene>
<name>YBDD_ECOLI</name>
<reference key="1">
    <citation type="journal article" date="1991" name="J. Mol. Biol.">
        <title>Molecular and functional characterization of a carbon starvation gene of Escherichia coli.</title>
        <authorList>
            <person name="Schultz J.E."/>
            <person name="Matin A."/>
        </authorList>
    </citation>
    <scope>NUCLEOTIDE SEQUENCE [GENOMIC DNA]</scope>
    <source>
        <strain>K12</strain>
    </source>
</reference>
<reference key="2">
    <citation type="journal article" date="1996" name="DNA Res.">
        <title>A 718-kb DNA sequence of the Escherichia coli K-12 genome corresponding to the 12.7-28.0 min region on the linkage map.</title>
        <authorList>
            <person name="Oshima T."/>
            <person name="Aiba H."/>
            <person name="Baba T."/>
            <person name="Fujita K."/>
            <person name="Hayashi K."/>
            <person name="Honjo A."/>
            <person name="Ikemoto K."/>
            <person name="Inada T."/>
            <person name="Itoh T."/>
            <person name="Kajihara M."/>
            <person name="Kanai K."/>
            <person name="Kashimoto K."/>
            <person name="Kimura S."/>
            <person name="Kitagawa M."/>
            <person name="Makino K."/>
            <person name="Masuda S."/>
            <person name="Miki T."/>
            <person name="Mizobuchi K."/>
            <person name="Mori H."/>
            <person name="Motomura K."/>
            <person name="Nakamura Y."/>
            <person name="Nashimoto H."/>
            <person name="Nishio Y."/>
            <person name="Saito N."/>
            <person name="Sampei G."/>
            <person name="Seki Y."/>
            <person name="Tagami H."/>
            <person name="Takemoto K."/>
            <person name="Wada C."/>
            <person name="Yamamoto Y."/>
            <person name="Yano M."/>
            <person name="Horiuchi T."/>
        </authorList>
    </citation>
    <scope>NUCLEOTIDE SEQUENCE [LARGE SCALE GENOMIC DNA]</scope>
    <source>
        <strain>K12 / W3110 / ATCC 27325 / DSM 5911</strain>
    </source>
</reference>
<reference key="3">
    <citation type="submission" date="1997-01" db="EMBL/GenBank/DDBJ databases">
        <title>Sequence of minutes 4-25 of Escherichia coli.</title>
        <authorList>
            <person name="Chung E."/>
            <person name="Allen E."/>
            <person name="Araujo R."/>
            <person name="Aparicio A.M."/>
            <person name="Davis K."/>
            <person name="Duncan M."/>
            <person name="Federspiel N."/>
            <person name="Hyman R."/>
            <person name="Kalman S."/>
            <person name="Komp C."/>
            <person name="Kurdi O."/>
            <person name="Lew H."/>
            <person name="Lin D."/>
            <person name="Namath A."/>
            <person name="Oefner P."/>
            <person name="Roberts D."/>
            <person name="Schramm S."/>
            <person name="Davis R.W."/>
        </authorList>
    </citation>
    <scope>NUCLEOTIDE SEQUENCE [LARGE SCALE GENOMIC DNA]</scope>
    <source>
        <strain>K12 / MG1655 / ATCC 47076</strain>
    </source>
</reference>
<reference key="4">
    <citation type="journal article" date="1997" name="Science">
        <title>The complete genome sequence of Escherichia coli K-12.</title>
        <authorList>
            <person name="Blattner F.R."/>
            <person name="Plunkett G. III"/>
            <person name="Bloch C.A."/>
            <person name="Perna N.T."/>
            <person name="Burland V."/>
            <person name="Riley M."/>
            <person name="Collado-Vides J."/>
            <person name="Glasner J.D."/>
            <person name="Rode C.K."/>
            <person name="Mayhew G.F."/>
            <person name="Gregor J."/>
            <person name="Davis N.W."/>
            <person name="Kirkpatrick H.A."/>
            <person name="Goeden M.A."/>
            <person name="Rose D.J."/>
            <person name="Mau B."/>
            <person name="Shao Y."/>
        </authorList>
    </citation>
    <scope>NUCLEOTIDE SEQUENCE [LARGE SCALE GENOMIC DNA]</scope>
    <source>
        <strain>K12 / MG1655 / ATCC 47076</strain>
    </source>
</reference>
<reference key="5">
    <citation type="journal article" date="2006" name="Mol. Syst. Biol.">
        <title>Highly accurate genome sequences of Escherichia coli K-12 strains MG1655 and W3110.</title>
        <authorList>
            <person name="Hayashi K."/>
            <person name="Morooka N."/>
            <person name="Yamamoto Y."/>
            <person name="Fujita K."/>
            <person name="Isono K."/>
            <person name="Choi S."/>
            <person name="Ohtsubo E."/>
            <person name="Baba T."/>
            <person name="Wanner B.L."/>
            <person name="Mori H."/>
            <person name="Horiuchi T."/>
        </authorList>
    </citation>
    <scope>NUCLEOTIDE SEQUENCE [LARGE SCALE GENOMIC DNA]</scope>
    <source>
        <strain>K12 / W3110 / ATCC 27325 / DSM 5911</strain>
    </source>
</reference>
<evidence type="ECO:0000305" key="1"/>
<comment type="similarity">
    <text evidence="1">To E.coli YjiX.</text>
</comment>
<protein>
    <recommendedName>
        <fullName>Uncharacterized protein YbdD</fullName>
    </recommendedName>
</protein>